<comment type="function">
    <text evidence="1">The hemorrhagic metalloproteinase-disintegrin-like bothrojarin-1 is a potent inhibitor of collagen-induced platelet aggregation by blockage of alpha-2/beta-1 (ITGA2/ITGB1) integrin. It does not present any fibrinogen-clotting activity (By similarity).</text>
</comment>
<comment type="cofactor">
    <cofactor evidence="1">
        <name>Zn(2+)</name>
        <dbReference type="ChEBI" id="CHEBI:29105"/>
    </cofactor>
    <text evidence="1">Binds 1 zinc ion per subunit.</text>
</comment>
<comment type="subunit">
    <text evidence="1">Monomer.</text>
</comment>
<comment type="subcellular location">
    <subcellularLocation>
        <location evidence="1">Secreted</location>
    </subcellularLocation>
</comment>
<comment type="tissue specificity">
    <text>Expressed by the venom gland.</text>
</comment>
<comment type="similarity">
    <text evidence="4">Belongs to the venom metalloproteinase (M12B) family. P-III subfamily. P-IIIa sub-subfamily.</text>
</comment>
<dbReference type="EC" id="3.4.24.-"/>
<dbReference type="EMBL" id="DQ375439">
    <property type="protein sequence ID" value="ABD34832.1"/>
    <property type="molecule type" value="mRNA"/>
</dbReference>
<dbReference type="SMR" id="Q0NZX7"/>
<dbReference type="GO" id="GO:0005576">
    <property type="term" value="C:extracellular region"/>
    <property type="evidence" value="ECO:0007669"/>
    <property type="project" value="UniProtKB-SubCell"/>
</dbReference>
<dbReference type="GO" id="GO:0005886">
    <property type="term" value="C:plasma membrane"/>
    <property type="evidence" value="ECO:0007669"/>
    <property type="project" value="TreeGrafter"/>
</dbReference>
<dbReference type="GO" id="GO:0046872">
    <property type="term" value="F:metal ion binding"/>
    <property type="evidence" value="ECO:0007669"/>
    <property type="project" value="UniProtKB-KW"/>
</dbReference>
<dbReference type="GO" id="GO:0008237">
    <property type="term" value="F:metallopeptidase activity"/>
    <property type="evidence" value="ECO:0007669"/>
    <property type="project" value="UniProtKB-KW"/>
</dbReference>
<dbReference type="GO" id="GO:0090729">
    <property type="term" value="F:toxin activity"/>
    <property type="evidence" value="ECO:0007669"/>
    <property type="project" value="UniProtKB-KW"/>
</dbReference>
<dbReference type="GO" id="GO:0006508">
    <property type="term" value="P:proteolysis"/>
    <property type="evidence" value="ECO:0007669"/>
    <property type="project" value="UniProtKB-KW"/>
</dbReference>
<dbReference type="FunFam" id="4.10.70.10:FF:000001">
    <property type="entry name" value="Disintegrin and metalloproteinase domain-containing protein 22"/>
    <property type="match status" value="1"/>
</dbReference>
<dbReference type="Gene3D" id="4.10.70.10">
    <property type="entry name" value="Disintegrin domain"/>
    <property type="match status" value="1"/>
</dbReference>
<dbReference type="InterPro" id="IPR018358">
    <property type="entry name" value="Disintegrin_CS"/>
</dbReference>
<dbReference type="InterPro" id="IPR001762">
    <property type="entry name" value="Disintegrin_dom"/>
</dbReference>
<dbReference type="InterPro" id="IPR036436">
    <property type="entry name" value="Disintegrin_dom_sf"/>
</dbReference>
<dbReference type="PANTHER" id="PTHR11905">
    <property type="entry name" value="ADAM A DISINTEGRIN AND METALLOPROTEASE DOMAIN"/>
    <property type="match status" value="1"/>
</dbReference>
<dbReference type="PANTHER" id="PTHR11905:SF32">
    <property type="entry name" value="DISINTEGRIN AND METALLOPROTEINASE DOMAIN-CONTAINING PROTEIN 28"/>
    <property type="match status" value="1"/>
</dbReference>
<dbReference type="Pfam" id="PF00200">
    <property type="entry name" value="Disintegrin"/>
    <property type="match status" value="1"/>
</dbReference>
<dbReference type="PRINTS" id="PR00289">
    <property type="entry name" value="DISINTEGRIN"/>
</dbReference>
<dbReference type="SMART" id="SM00050">
    <property type="entry name" value="DISIN"/>
    <property type="match status" value="1"/>
</dbReference>
<dbReference type="SUPFAM" id="SSF57552">
    <property type="entry name" value="Blood coagulation inhibitor (disintegrin)"/>
    <property type="match status" value="1"/>
</dbReference>
<dbReference type="PROSITE" id="PS00427">
    <property type="entry name" value="DISINTEGRIN_1"/>
    <property type="match status" value="1"/>
</dbReference>
<dbReference type="PROSITE" id="PS50214">
    <property type="entry name" value="DISINTEGRIN_2"/>
    <property type="match status" value="1"/>
</dbReference>
<reference key="1">
    <citation type="journal article" date="2006" name="Toxicon">
        <title>Molecular diversity of disintegrin-like domains within metalloproteinase precursors of Bothrops jararaca.</title>
        <authorList>
            <person name="Cidade D.A.P."/>
            <person name="Wermelinger L.S."/>
            <person name="Lobo-Hajdu G."/>
            <person name="Davila A.M.R."/>
            <person name="Bon C."/>
            <person name="Zingali R.B."/>
            <person name="Albano R.M."/>
        </authorList>
    </citation>
    <scope>NUCLEOTIDE SEQUENCE [MRNA]</scope>
    <source>
        <tissue>Venom gland</tissue>
    </source>
</reference>
<keyword id="KW-0106">Calcium</keyword>
<keyword id="KW-1217">Cell adhesion impairing toxin</keyword>
<keyword id="KW-1015">Disulfide bond</keyword>
<keyword id="KW-0325">Glycoprotein</keyword>
<keyword id="KW-1199">Hemostasis impairing toxin</keyword>
<keyword id="KW-0378">Hydrolase</keyword>
<keyword id="KW-0479">Metal-binding</keyword>
<keyword id="KW-0482">Metalloprotease</keyword>
<keyword id="KW-1201">Platelet aggregation inhibiting toxin</keyword>
<keyword id="KW-0645">Protease</keyword>
<keyword id="KW-0964">Secreted</keyword>
<keyword id="KW-0800">Toxin</keyword>
<keyword id="KW-0862">Zinc</keyword>
<keyword id="KW-0865">Zymogen</keyword>
<organism>
    <name type="scientific">Bothrops jararaca</name>
    <name type="common">Jararaca</name>
    <name type="synonym">Bothrops jajaraca</name>
    <dbReference type="NCBI Taxonomy" id="8724"/>
    <lineage>
        <taxon>Eukaryota</taxon>
        <taxon>Metazoa</taxon>
        <taxon>Chordata</taxon>
        <taxon>Craniata</taxon>
        <taxon>Vertebrata</taxon>
        <taxon>Euteleostomi</taxon>
        <taxon>Lepidosauria</taxon>
        <taxon>Squamata</taxon>
        <taxon>Bifurcata</taxon>
        <taxon>Unidentata</taxon>
        <taxon>Episquamata</taxon>
        <taxon>Toxicofera</taxon>
        <taxon>Serpentes</taxon>
        <taxon>Colubroidea</taxon>
        <taxon>Viperidae</taxon>
        <taxon>Crotalinae</taxon>
        <taxon>Bothrops</taxon>
    </lineage>
</organism>
<feature type="chain" id="PRO_0000329986" description="Zinc metalloproteinase-disintegrin-like bothrojarin-4">
    <location>
        <begin position="1" status="less than"/>
        <end position="97" status="greater than"/>
    </location>
</feature>
<feature type="domain" description="Disintegrin" evidence="3">
    <location>
        <begin position="4"/>
        <end position="90"/>
    </location>
</feature>
<feature type="short sequence motif" description="D/ECD-tripeptide; atypical (KCD)">
    <location>
        <begin position="68"/>
        <end position="70"/>
    </location>
</feature>
<feature type="binding site" evidence="1">
    <location>
        <position position="6"/>
    </location>
    <ligand>
        <name>Ca(2+)</name>
        <dbReference type="ChEBI" id="CHEBI:29108"/>
    </ligand>
</feature>
<feature type="binding site" evidence="1">
    <location>
        <position position="9"/>
    </location>
    <ligand>
        <name>Ca(2+)</name>
        <dbReference type="ChEBI" id="CHEBI:29108"/>
    </ligand>
</feature>
<feature type="binding site" evidence="1">
    <location>
        <position position="11"/>
    </location>
    <ligand>
        <name>Ca(2+)</name>
        <dbReference type="ChEBI" id="CHEBI:29108"/>
    </ligand>
</feature>
<feature type="binding site" evidence="1">
    <location>
        <position position="13"/>
    </location>
    <ligand>
        <name>Ca(2+)</name>
        <dbReference type="ChEBI" id="CHEBI:29108"/>
    </ligand>
</feature>
<feature type="binding site" evidence="1">
    <location>
        <position position="16"/>
    </location>
    <ligand>
        <name>Ca(2+)</name>
        <dbReference type="ChEBI" id="CHEBI:29108"/>
    </ligand>
</feature>
<feature type="binding site" evidence="1">
    <location>
        <position position="19"/>
    </location>
    <ligand>
        <name>Ca(2+)</name>
        <dbReference type="ChEBI" id="CHEBI:29108"/>
    </ligand>
</feature>
<feature type="glycosylation site" description="N-linked (GlcNAc...) asparagine" evidence="2">
    <location>
        <position position="32"/>
    </location>
</feature>
<feature type="disulfide bond" evidence="3">
    <location>
        <begin position="7"/>
        <end position="36"/>
    </location>
</feature>
<feature type="disulfide bond" evidence="3">
    <location>
        <begin position="18"/>
        <end position="31"/>
    </location>
</feature>
<feature type="disulfide bond" evidence="3">
    <location>
        <begin position="20"/>
        <end position="26"/>
    </location>
</feature>
<feature type="disulfide bond" evidence="3">
    <location>
        <begin position="30"/>
        <end position="53"/>
    </location>
</feature>
<feature type="disulfide bond" evidence="3">
    <location>
        <begin position="44"/>
        <end position="50"/>
    </location>
</feature>
<feature type="disulfide bond" evidence="3">
    <location>
        <begin position="49"/>
        <end position="75"/>
    </location>
</feature>
<feature type="disulfide bond" evidence="3">
    <location>
        <begin position="62"/>
        <end position="82"/>
    </location>
</feature>
<feature type="non-terminal residue">
    <location>
        <position position="1"/>
    </location>
</feature>
<feature type="non-terminal residue">
    <location>
        <position position="97"/>
    </location>
</feature>
<name>VM3B4_BOTJA</name>
<sequence length="97" mass="10531">IVSPPVCGNYFVEVGEECDCGLPRNCQNQCCNATTCKLIPGAQCEDGECCERCQFKGAGNVCRPRRSKCDIAESCTGQSPDCPTDRFRRNGVSCLNN</sequence>
<evidence type="ECO:0000250" key="1"/>
<evidence type="ECO:0000255" key="2"/>
<evidence type="ECO:0000255" key="3">
    <source>
        <dbReference type="PROSITE-ProRule" id="PRU00068"/>
    </source>
</evidence>
<evidence type="ECO:0000305" key="4"/>
<proteinExistence type="evidence at transcript level"/>
<accession>Q0NZX7</accession>
<protein>
    <recommendedName>
        <fullName>Zinc metalloproteinase-disintegrin-like bothrojarin-4</fullName>
        <ecNumber>3.4.24.-</ecNumber>
    </recommendedName>
    <alternativeName>
        <fullName>Snake venom metalloproteinase</fullName>
        <shortName>SVMP</shortName>
    </alternativeName>
</protein>